<protein>
    <recommendedName>
        <fullName evidence="1">Ferredoxin--NADP reductase</fullName>
        <shortName evidence="1">FNR</shortName>
        <shortName evidence="1">Fd-NADP(+) reductase</shortName>
        <ecNumber evidence="1">1.18.1.2</ecNumber>
    </recommendedName>
</protein>
<feature type="chain" id="PRO_0000364925" description="Ferredoxin--NADP reductase">
    <location>
        <begin position="1"/>
        <end position="335"/>
    </location>
</feature>
<feature type="binding site" evidence="1">
    <location>
        <position position="34"/>
    </location>
    <ligand>
        <name>FAD</name>
        <dbReference type="ChEBI" id="CHEBI:57692"/>
    </ligand>
</feature>
<feature type="binding site" evidence="1">
    <location>
        <position position="42"/>
    </location>
    <ligand>
        <name>FAD</name>
        <dbReference type="ChEBI" id="CHEBI:57692"/>
    </ligand>
</feature>
<feature type="binding site" evidence="1">
    <location>
        <position position="47"/>
    </location>
    <ligand>
        <name>FAD</name>
        <dbReference type="ChEBI" id="CHEBI:57692"/>
    </ligand>
</feature>
<feature type="binding site" evidence="1">
    <location>
        <position position="87"/>
    </location>
    <ligand>
        <name>FAD</name>
        <dbReference type="ChEBI" id="CHEBI:57692"/>
    </ligand>
</feature>
<feature type="binding site" evidence="1">
    <location>
        <position position="121"/>
    </location>
    <ligand>
        <name>FAD</name>
        <dbReference type="ChEBI" id="CHEBI:57692"/>
    </ligand>
</feature>
<feature type="binding site" evidence="1">
    <location>
        <position position="287"/>
    </location>
    <ligand>
        <name>FAD</name>
        <dbReference type="ChEBI" id="CHEBI:57692"/>
    </ligand>
</feature>
<feature type="binding site" evidence="1">
    <location>
        <position position="328"/>
    </location>
    <ligand>
        <name>FAD</name>
        <dbReference type="ChEBI" id="CHEBI:57692"/>
    </ligand>
</feature>
<gene>
    <name type="ordered locus">RF_0700</name>
</gene>
<organism>
    <name type="scientific">Rickettsia felis (strain ATCC VR-1525 / URRWXCal2)</name>
    <name type="common">Rickettsia azadi</name>
    <dbReference type="NCBI Taxonomy" id="315456"/>
    <lineage>
        <taxon>Bacteria</taxon>
        <taxon>Pseudomonadati</taxon>
        <taxon>Pseudomonadota</taxon>
        <taxon>Alphaproteobacteria</taxon>
        <taxon>Rickettsiales</taxon>
        <taxon>Rickettsiaceae</taxon>
        <taxon>Rickettsieae</taxon>
        <taxon>Rickettsia</taxon>
        <taxon>spotted fever group</taxon>
    </lineage>
</organism>
<accession>Q4ULM2</accession>
<reference key="1">
    <citation type="journal article" date="2005" name="PLoS Biol.">
        <title>The genome sequence of Rickettsia felis identifies the first putative conjugative plasmid in an obligate intracellular parasite.</title>
        <authorList>
            <person name="Ogata H."/>
            <person name="Renesto P."/>
            <person name="Audic S."/>
            <person name="Robert C."/>
            <person name="Blanc G."/>
            <person name="Fournier P.-E."/>
            <person name="Parinello H."/>
            <person name="Claverie J.-M."/>
            <person name="Raoult D."/>
        </authorList>
    </citation>
    <scope>NUCLEOTIDE SEQUENCE [LARGE SCALE GENOMIC DNA]</scope>
    <source>
        <strain>ATCC VR-1525 / URRWXCal2</strain>
    </source>
</reference>
<proteinExistence type="inferred from homology"/>
<name>FENR_RICFE</name>
<evidence type="ECO:0000255" key="1">
    <source>
        <dbReference type="HAMAP-Rule" id="MF_01685"/>
    </source>
</evidence>
<dbReference type="EC" id="1.18.1.2" evidence="1"/>
<dbReference type="EMBL" id="CP000053">
    <property type="protein sequence ID" value="AAY61551.1"/>
    <property type="molecule type" value="Genomic_DNA"/>
</dbReference>
<dbReference type="SMR" id="Q4ULM2"/>
<dbReference type="STRING" id="315456.RF_0700"/>
<dbReference type="KEGG" id="rfe:RF_0700"/>
<dbReference type="eggNOG" id="COG0492">
    <property type="taxonomic scope" value="Bacteria"/>
</dbReference>
<dbReference type="HOGENOM" id="CLU_031864_5_5_5"/>
<dbReference type="OrthoDB" id="9806179at2"/>
<dbReference type="Proteomes" id="UP000008548">
    <property type="component" value="Chromosome"/>
</dbReference>
<dbReference type="GO" id="GO:0004324">
    <property type="term" value="F:ferredoxin-NADP+ reductase activity"/>
    <property type="evidence" value="ECO:0007669"/>
    <property type="project" value="UniProtKB-UniRule"/>
</dbReference>
<dbReference type="GO" id="GO:0050660">
    <property type="term" value="F:flavin adenine dinucleotide binding"/>
    <property type="evidence" value="ECO:0007669"/>
    <property type="project" value="UniProtKB-UniRule"/>
</dbReference>
<dbReference type="GO" id="GO:0050661">
    <property type="term" value="F:NADP binding"/>
    <property type="evidence" value="ECO:0007669"/>
    <property type="project" value="UniProtKB-UniRule"/>
</dbReference>
<dbReference type="Gene3D" id="3.50.50.60">
    <property type="entry name" value="FAD/NAD(P)-binding domain"/>
    <property type="match status" value="2"/>
</dbReference>
<dbReference type="HAMAP" id="MF_01685">
    <property type="entry name" value="FENR2"/>
    <property type="match status" value="1"/>
</dbReference>
<dbReference type="InterPro" id="IPR036188">
    <property type="entry name" value="FAD/NAD-bd_sf"/>
</dbReference>
<dbReference type="InterPro" id="IPR023753">
    <property type="entry name" value="FAD/NAD-binding_dom"/>
</dbReference>
<dbReference type="InterPro" id="IPR022890">
    <property type="entry name" value="Fd--NADP_Rdtase_type_2"/>
</dbReference>
<dbReference type="InterPro" id="IPR050097">
    <property type="entry name" value="Ferredoxin-NADP_redctase_2"/>
</dbReference>
<dbReference type="PANTHER" id="PTHR48105">
    <property type="entry name" value="THIOREDOXIN REDUCTASE 1-RELATED-RELATED"/>
    <property type="match status" value="1"/>
</dbReference>
<dbReference type="Pfam" id="PF07992">
    <property type="entry name" value="Pyr_redox_2"/>
    <property type="match status" value="1"/>
</dbReference>
<dbReference type="PRINTS" id="PR00368">
    <property type="entry name" value="FADPNR"/>
</dbReference>
<dbReference type="PRINTS" id="PR00469">
    <property type="entry name" value="PNDRDTASEII"/>
</dbReference>
<dbReference type="SUPFAM" id="SSF51905">
    <property type="entry name" value="FAD/NAD(P)-binding domain"/>
    <property type="match status" value="1"/>
</dbReference>
<keyword id="KW-0274">FAD</keyword>
<keyword id="KW-0285">Flavoprotein</keyword>
<keyword id="KW-0521">NADP</keyword>
<keyword id="KW-0560">Oxidoreductase</keyword>
<comment type="catalytic activity">
    <reaction evidence="1">
        <text>2 reduced [2Fe-2S]-[ferredoxin] + NADP(+) + H(+) = 2 oxidized [2Fe-2S]-[ferredoxin] + NADPH</text>
        <dbReference type="Rhea" id="RHEA:20125"/>
        <dbReference type="Rhea" id="RHEA-COMP:10000"/>
        <dbReference type="Rhea" id="RHEA-COMP:10001"/>
        <dbReference type="ChEBI" id="CHEBI:15378"/>
        <dbReference type="ChEBI" id="CHEBI:33737"/>
        <dbReference type="ChEBI" id="CHEBI:33738"/>
        <dbReference type="ChEBI" id="CHEBI:57783"/>
        <dbReference type="ChEBI" id="CHEBI:58349"/>
        <dbReference type="EC" id="1.18.1.2"/>
    </reaction>
</comment>
<comment type="cofactor">
    <cofactor evidence="1">
        <name>FAD</name>
        <dbReference type="ChEBI" id="CHEBI:57692"/>
    </cofactor>
    <text evidence="1">Binds 1 FAD per subunit.</text>
</comment>
<comment type="subunit">
    <text evidence="1">Homodimer.</text>
</comment>
<comment type="similarity">
    <text evidence="1">Belongs to the ferredoxin--NADP reductase type 2 family.</text>
</comment>
<sequence length="335" mass="36967">MTHTTDVVIIGTGPVGLFAVFQAGMLGMKCHIIDAQEIIGGQCITLYPEKPIYDIPAYPKIAAEELIKQLELQAAPFKPVYHLNQQAIELNKQDDFFEIKTSKNTLIKSKVIIIAAGAGSFGPNKPPLANIEDFEGKSVFYFINDKSKFAGKNIVIAGGGDSAVDWAISLSEIANKIYLVHRRDKFTAAPESVRQLRHIAETGKIELVTGYQLNALDGNNSELQSVIVKDLQNNTRKLDANILLPFFGLKQDLGSLANWGLNVKLHHIEVDNSYYQTNIEGIYAIGDIAHYAGKLKLILTGFAEAASSLHHAYSRVFDGKALHFEYSTTKYGERK</sequence>